<feature type="chain" id="PRO_1000088876" description="Ribosome-binding factor A">
    <location>
        <begin position="1"/>
        <end position="120"/>
    </location>
</feature>
<accession>B1II48</accession>
<proteinExistence type="inferred from homology"/>
<organism>
    <name type="scientific">Clostridium botulinum (strain Okra / Type B1)</name>
    <dbReference type="NCBI Taxonomy" id="498213"/>
    <lineage>
        <taxon>Bacteria</taxon>
        <taxon>Bacillati</taxon>
        <taxon>Bacillota</taxon>
        <taxon>Clostridia</taxon>
        <taxon>Eubacteriales</taxon>
        <taxon>Clostridiaceae</taxon>
        <taxon>Clostridium</taxon>
    </lineage>
</organism>
<keyword id="KW-0963">Cytoplasm</keyword>
<keyword id="KW-0690">Ribosome biogenesis</keyword>
<reference key="1">
    <citation type="journal article" date="2007" name="PLoS ONE">
        <title>Analysis of the neurotoxin complex genes in Clostridium botulinum A1-A4 and B1 strains: BoNT/A3, /Ba4 and /B1 clusters are located within plasmids.</title>
        <authorList>
            <person name="Smith T.J."/>
            <person name="Hill K.K."/>
            <person name="Foley B.T."/>
            <person name="Detter J.C."/>
            <person name="Munk A.C."/>
            <person name="Bruce D.C."/>
            <person name="Doggett N.A."/>
            <person name="Smith L.A."/>
            <person name="Marks J.D."/>
            <person name="Xie G."/>
            <person name="Brettin T.S."/>
        </authorList>
    </citation>
    <scope>NUCLEOTIDE SEQUENCE [LARGE SCALE GENOMIC DNA]</scope>
    <source>
        <strain>Okra / Type B1</strain>
    </source>
</reference>
<dbReference type="EMBL" id="CP000939">
    <property type="protein sequence ID" value="ACA43801.1"/>
    <property type="molecule type" value="Genomic_DNA"/>
</dbReference>
<dbReference type="RefSeq" id="WP_003406054.1">
    <property type="nucleotide sequence ID" value="NC_010516.1"/>
</dbReference>
<dbReference type="SMR" id="B1II48"/>
<dbReference type="KEGG" id="cbb:CLD_2223"/>
<dbReference type="HOGENOM" id="CLU_089475_6_3_9"/>
<dbReference type="Proteomes" id="UP000008541">
    <property type="component" value="Chromosome"/>
</dbReference>
<dbReference type="GO" id="GO:0005829">
    <property type="term" value="C:cytosol"/>
    <property type="evidence" value="ECO:0007669"/>
    <property type="project" value="TreeGrafter"/>
</dbReference>
<dbReference type="GO" id="GO:0043024">
    <property type="term" value="F:ribosomal small subunit binding"/>
    <property type="evidence" value="ECO:0007669"/>
    <property type="project" value="TreeGrafter"/>
</dbReference>
<dbReference type="GO" id="GO:0030490">
    <property type="term" value="P:maturation of SSU-rRNA"/>
    <property type="evidence" value="ECO:0007669"/>
    <property type="project" value="UniProtKB-UniRule"/>
</dbReference>
<dbReference type="FunFam" id="3.30.300.20:FF:000030">
    <property type="entry name" value="Ribosome-binding factor A"/>
    <property type="match status" value="1"/>
</dbReference>
<dbReference type="Gene3D" id="3.30.300.20">
    <property type="match status" value="1"/>
</dbReference>
<dbReference type="HAMAP" id="MF_00003">
    <property type="entry name" value="RbfA"/>
    <property type="match status" value="1"/>
</dbReference>
<dbReference type="InterPro" id="IPR015946">
    <property type="entry name" value="KH_dom-like_a/b"/>
</dbReference>
<dbReference type="InterPro" id="IPR000238">
    <property type="entry name" value="RbfA"/>
</dbReference>
<dbReference type="InterPro" id="IPR023799">
    <property type="entry name" value="RbfA_dom_sf"/>
</dbReference>
<dbReference type="InterPro" id="IPR020053">
    <property type="entry name" value="Ribosome-bd_factorA_CS"/>
</dbReference>
<dbReference type="NCBIfam" id="TIGR00082">
    <property type="entry name" value="rbfA"/>
    <property type="match status" value="1"/>
</dbReference>
<dbReference type="PANTHER" id="PTHR33515">
    <property type="entry name" value="RIBOSOME-BINDING FACTOR A, CHLOROPLASTIC-RELATED"/>
    <property type="match status" value="1"/>
</dbReference>
<dbReference type="PANTHER" id="PTHR33515:SF1">
    <property type="entry name" value="RIBOSOME-BINDING FACTOR A, CHLOROPLASTIC-RELATED"/>
    <property type="match status" value="1"/>
</dbReference>
<dbReference type="Pfam" id="PF02033">
    <property type="entry name" value="RBFA"/>
    <property type="match status" value="1"/>
</dbReference>
<dbReference type="SUPFAM" id="SSF89919">
    <property type="entry name" value="Ribosome-binding factor A, RbfA"/>
    <property type="match status" value="1"/>
</dbReference>
<dbReference type="PROSITE" id="PS01319">
    <property type="entry name" value="RBFA"/>
    <property type="match status" value="1"/>
</dbReference>
<sequence>MAKYRAGRINEEVKKEVSNIIHNDIKDPRLSAMVSVTDVDVTKDLKYAKVYVSIFGNEKAKEESLQALKSSVGFIRKEIGRRVKLRNTPEVIIEVDNSIERGMHIDELLHSIKENESNDN</sequence>
<protein>
    <recommendedName>
        <fullName evidence="1">Ribosome-binding factor A</fullName>
    </recommendedName>
</protein>
<gene>
    <name evidence="1" type="primary">rbfA</name>
    <name type="ordered locus">CLD_2223</name>
</gene>
<name>RBFA_CLOBK</name>
<comment type="function">
    <text evidence="1">One of several proteins that assist in the late maturation steps of the functional core of the 30S ribosomal subunit. Associates with free 30S ribosomal subunits (but not with 30S subunits that are part of 70S ribosomes or polysomes). Required for efficient processing of 16S rRNA. May interact with the 5'-terminal helix region of 16S rRNA.</text>
</comment>
<comment type="subunit">
    <text evidence="1">Monomer. Binds 30S ribosomal subunits, but not 50S ribosomal subunits or 70S ribosomes.</text>
</comment>
<comment type="subcellular location">
    <subcellularLocation>
        <location evidence="1">Cytoplasm</location>
    </subcellularLocation>
</comment>
<comment type="similarity">
    <text evidence="1">Belongs to the RbfA family.</text>
</comment>
<evidence type="ECO:0000255" key="1">
    <source>
        <dbReference type="HAMAP-Rule" id="MF_00003"/>
    </source>
</evidence>